<gene>
    <name type="ORF">ORF5</name>
</gene>
<name>ORF5_HAPV1</name>
<reference key="1">
    <citation type="journal article" date="2009" name="Mol. Microbiol.">
        <title>An ssDNA virus infecting archaea: a new lineage of viruses with a membrane envelope.</title>
        <authorList>
            <person name="Pietila M.K."/>
            <person name="Roine E."/>
            <person name="Paulin L."/>
            <person name="Kalkkinen N."/>
            <person name="Bamford D.H."/>
        </authorList>
    </citation>
    <scope>NUCLEOTIDE SEQUENCE [GENOMIC DNA]</scope>
</reference>
<feature type="chain" id="PRO_0000420964" description="Uncharacterized protein 5">
    <location>
        <begin position="1"/>
        <end position="57"/>
    </location>
</feature>
<keyword id="KW-1185">Reference proteome</keyword>
<dbReference type="EMBL" id="FJ685651">
    <property type="protein sequence ID" value="ACO54900.1"/>
    <property type="molecule type" value="Genomic_DNA"/>
</dbReference>
<dbReference type="RefSeq" id="YP_002791890.1">
    <property type="nucleotide sequence ID" value="NC_012558.1"/>
</dbReference>
<dbReference type="KEGG" id="vg:7755265"/>
<dbReference type="Proteomes" id="UP000009401">
    <property type="component" value="Genome"/>
</dbReference>
<accession>C1JJY4</accession>
<organismHost>
    <name type="scientific">Halorubrum sp. PV6</name>
    <dbReference type="NCBI Taxonomy" id="634157"/>
</organismHost>
<protein>
    <recommendedName>
        <fullName>Uncharacterized protein 5</fullName>
    </recommendedName>
</protein>
<proteinExistence type="predicted"/>
<sequence length="57" mass="6117">MIQSLLLDLLPIRSFVMLALVVVGLQLVGVDVIGPAIDMARNFMLDTFSVSDLGSLV</sequence>
<organism>
    <name type="scientific">Halorubrum pleomorphic virus 1</name>
    <name type="common">HRPV-1</name>
    <dbReference type="NCBI Taxonomy" id="634168"/>
    <lineage>
        <taxon>Viruses</taxon>
        <taxon>Monodnaviria</taxon>
        <taxon>Trapavirae</taxon>
        <taxon>Saleviricota</taxon>
        <taxon>Huolimaviricetes</taxon>
        <taxon>Haloruvirales</taxon>
        <taxon>Pleolipoviridae</taxon>
        <taxon>Alphapleolipovirus</taxon>
        <taxon>Alphapleolipovirus finnoniense</taxon>
    </lineage>
</organism>